<name>SPXH_STAA1</name>
<organism>
    <name type="scientific">Staphylococcus aureus (strain Mu3 / ATCC 700698)</name>
    <dbReference type="NCBI Taxonomy" id="418127"/>
    <lineage>
        <taxon>Bacteria</taxon>
        <taxon>Bacillati</taxon>
        <taxon>Bacillota</taxon>
        <taxon>Bacilli</taxon>
        <taxon>Bacillales</taxon>
        <taxon>Staphylococcaceae</taxon>
        <taxon>Staphylococcus</taxon>
    </lineage>
</organism>
<comment type="function">
    <text evidence="1">Adapter protein required for efficient degradation of Spx by ClpXP under non-stress conditions. Interaction with Spx stabilizes Spx and exposes the C-terminus of Spx for recognition and proteolysis by ClpXP.</text>
</comment>
<comment type="subunit">
    <text evidence="1">Interacts with Spx.</text>
</comment>
<comment type="subcellular location">
    <subcellularLocation>
        <location evidence="1">Cytoplasm</location>
    </subcellularLocation>
</comment>
<comment type="similarity">
    <text evidence="1">Belongs to the SpxH family.</text>
</comment>
<comment type="sequence caution" evidence="2">
    <conflict type="erroneous initiation">
        <sequence resource="EMBL-CDS" id="BAF77879"/>
    </conflict>
</comment>
<reference key="1">
    <citation type="journal article" date="2008" name="Antimicrob. Agents Chemother.">
        <title>Mutated response regulator graR is responsible for phenotypic conversion of Staphylococcus aureus from heterogeneous vancomycin-intermediate resistance to vancomycin-intermediate resistance.</title>
        <authorList>
            <person name="Neoh H.-M."/>
            <person name="Cui L."/>
            <person name="Yuzawa H."/>
            <person name="Takeuchi F."/>
            <person name="Matsuo M."/>
            <person name="Hiramatsu K."/>
        </authorList>
    </citation>
    <scope>NUCLEOTIDE SEQUENCE [LARGE SCALE GENOMIC DNA]</scope>
    <source>
        <strain>Mu3 / ATCC 700698</strain>
    </source>
</reference>
<reference key="2">
    <citation type="journal article" date="2004" name="J. Antimicrob. Chemother.">
        <title>Genetic analysis of 17 genes in Staphylococcus aureus with reduced susceptibility to vancomycin (VISA) and heteroVISA.</title>
        <authorList>
            <person name="Wootton M."/>
            <person name="Avison M.B."/>
            <person name="Bennett P.M."/>
            <person name="Howe R.A."/>
            <person name="MacGowan A.P."/>
            <person name="Walsh T.R."/>
        </authorList>
    </citation>
    <scope>NUCLEOTIDE SEQUENCE [GENOMIC DNA] OF 8-268</scope>
</reference>
<accession>A7X0M6</accession>
<accession>P0C2H5</accession>
<accession>Q7WRM0</accession>
<accession>Q7X225</accession>
<keyword id="KW-0963">Cytoplasm</keyword>
<protein>
    <recommendedName>
        <fullName evidence="1">ClpXP adapter protein SpxH</fullName>
    </recommendedName>
</protein>
<sequence>MAGELRIMENKSREDINLSPVSKIEIYSFFDPFSSDCFKLSAILSKLRIEYNQYIRIRHILNPSLKVLTKCQAQSTSNFDNIALAYKAAELQGRVRAERFIHLMQNEIIPKRDIITESMICDCIQNAGIDLEVFKDDLQKSKLTESLKIDLHIAREMEIEQAPSLVFFSEDVHEEGLKVEGLYPYHIYTYIINELMGKPIEKNLPPKLETYIQQQQLVTMEELLTIYEWPEKLLNKELKKLAIQQKIEKLKYPDGDFWKSKMPKIKSK</sequence>
<feature type="chain" id="PRO_0000313014" description="ClpXP adapter protein SpxH">
    <location>
        <begin position="1"/>
        <end position="268"/>
    </location>
</feature>
<dbReference type="EMBL" id="AP009324">
    <property type="protein sequence ID" value="BAF77879.1"/>
    <property type="status" value="ALT_INIT"/>
    <property type="molecule type" value="Genomic_DNA"/>
</dbReference>
<dbReference type="EMBL" id="AJ564071">
    <property type="protein sequence ID" value="CAD91855.1"/>
    <property type="molecule type" value="Genomic_DNA"/>
</dbReference>
<dbReference type="SMR" id="A7X0M6"/>
<dbReference type="KEGG" id="saw:SAHV_0996"/>
<dbReference type="HOGENOM" id="CLU_069785_0_0_9"/>
<dbReference type="GO" id="GO:0005737">
    <property type="term" value="C:cytoplasm"/>
    <property type="evidence" value="ECO:0007669"/>
    <property type="project" value="UniProtKB-SubCell"/>
</dbReference>
<dbReference type="Gene3D" id="3.40.30.10">
    <property type="entry name" value="Glutaredoxin"/>
    <property type="match status" value="1"/>
</dbReference>
<dbReference type="HAMAP" id="MF_02245">
    <property type="entry name" value="Adapter_SpxH"/>
    <property type="match status" value="1"/>
</dbReference>
<dbReference type="InterPro" id="IPR046404">
    <property type="entry name" value="Adapter_SpxH"/>
</dbReference>
<dbReference type="InterPro" id="IPR036249">
    <property type="entry name" value="Thioredoxin-like_sf"/>
</dbReference>
<dbReference type="PANTHER" id="PTHR13887:SF47">
    <property type="entry name" value="CLPXP ADAPTER PROTEIN SPXH"/>
    <property type="match status" value="1"/>
</dbReference>
<dbReference type="PANTHER" id="PTHR13887">
    <property type="entry name" value="GLUTATHIONE S-TRANSFERASE KAPPA"/>
    <property type="match status" value="1"/>
</dbReference>
<dbReference type="Pfam" id="PF13743">
    <property type="entry name" value="Thioredoxin_5"/>
    <property type="match status" value="1"/>
</dbReference>
<dbReference type="SUPFAM" id="SSF52833">
    <property type="entry name" value="Thioredoxin-like"/>
    <property type="match status" value="1"/>
</dbReference>
<evidence type="ECO:0000255" key="1">
    <source>
        <dbReference type="HAMAP-Rule" id="MF_02245"/>
    </source>
</evidence>
<evidence type="ECO:0000305" key="2"/>
<gene>
    <name evidence="1" type="primary">spxH</name>
    <name type="ordered locus">SAHV_0996</name>
</gene>
<proteinExistence type="inferred from homology"/>